<accession>Q8R2Z3</accession>
<accession>A2AJZ4</accession>
<accession>B1AWS0</accession>
<comment type="function">
    <text evidence="1 4 5 8 9 10 11 12">Acts as an anion channel mediating the transport of chloride, bromide, iodide, nitrate, sulfate, gluconate, thiocyanate and bicarbonate ions (PubMed:15591059, PubMed:24810589, PubMed:30333321, PubMed:32726161, PubMed:35788623). Its permeability towards bicarbonate is weak and increases when pH is above 7 (PubMed:15591059). Mediates oxalate transport (By similarity). Mediates thiocyanate transport in retinal pigment epithelium cells (PubMed:32726161). Mediates iodide transport in the thyroid gland, playing an important role in the synthesis of thyroid hormones and the maintenance of thyroid function (PubMed:30333321, PubMed:35788623). Although it is an anion channel, according to PubMed:12736153 and PubMed:19723628 it has been shown to exhibit chloride-bicarbonate exchanger activity.</text>
</comment>
<comment type="catalytic activity">
    <reaction evidence="5 9">
        <text>chloride(in) = chloride(out)</text>
        <dbReference type="Rhea" id="RHEA:29823"/>
        <dbReference type="ChEBI" id="CHEBI:17996"/>
    </reaction>
</comment>
<comment type="catalytic activity">
    <reaction evidence="5 9 10 12">
        <text>iodide(out) = iodide(in)</text>
        <dbReference type="Rhea" id="RHEA:66324"/>
        <dbReference type="ChEBI" id="CHEBI:16382"/>
    </reaction>
    <physiologicalReaction direction="right-to-left" evidence="15">
        <dbReference type="Rhea" id="RHEA:66326"/>
    </physiologicalReaction>
</comment>
<comment type="catalytic activity">
    <reaction evidence="5">
        <text>bromide(in) = bromide(out)</text>
        <dbReference type="Rhea" id="RHEA:75383"/>
        <dbReference type="ChEBI" id="CHEBI:15858"/>
    </reaction>
</comment>
<comment type="catalytic activity">
    <reaction evidence="1">
        <text>oxalate(in) = oxalate(out)</text>
        <dbReference type="Rhea" id="RHEA:76199"/>
        <dbReference type="ChEBI" id="CHEBI:30623"/>
    </reaction>
</comment>
<comment type="catalytic activity">
    <reaction evidence="5 9">
        <text>nitrate(in) = nitrate(out)</text>
        <dbReference type="Rhea" id="RHEA:34923"/>
        <dbReference type="ChEBI" id="CHEBI:17632"/>
    </reaction>
</comment>
<comment type="catalytic activity">
    <reaction evidence="5">
        <text>sulfate(in) = sulfate(out)</text>
        <dbReference type="Rhea" id="RHEA:34983"/>
        <dbReference type="ChEBI" id="CHEBI:16189"/>
    </reaction>
</comment>
<comment type="catalytic activity">
    <reaction evidence="5">
        <text>hydrogencarbonate(in) = hydrogencarbonate(out)</text>
        <dbReference type="Rhea" id="RHEA:28695"/>
        <dbReference type="ChEBI" id="CHEBI:17544"/>
    </reaction>
    <physiologicalReaction direction="right-to-left" evidence="14">
        <dbReference type="Rhea" id="RHEA:28697"/>
    </physiologicalReaction>
</comment>
<comment type="catalytic activity">
    <reaction evidence="5">
        <text>D-gluconate(in) = D-gluconate(out)</text>
        <dbReference type="Rhea" id="RHEA:76139"/>
        <dbReference type="ChEBI" id="CHEBI:18391"/>
    </reaction>
</comment>
<comment type="catalytic activity">
    <reaction evidence="11">
        <text>thiocyanate(in) = thiocyanate(out)</text>
        <dbReference type="Rhea" id="RHEA:75347"/>
        <dbReference type="ChEBI" id="CHEBI:18022"/>
    </reaction>
</comment>
<comment type="catalytic activity">
    <reaction evidence="4 8">
        <text>hydrogencarbonate(in) + chloride(out) = hydrogencarbonate(out) + chloride(in)</text>
        <dbReference type="Rhea" id="RHEA:72363"/>
        <dbReference type="ChEBI" id="CHEBI:17544"/>
        <dbReference type="ChEBI" id="CHEBI:17996"/>
    </reaction>
</comment>
<comment type="activity regulation">
    <text evidence="4 5 9">Regulated by pH. Activity inhibited by all inhibitors of several anion channels and transporters, including 4,4'-Di-isothiocyanatostilbene-2,2'-disulfonic acid (DIDS), diphenylamine-2-carboxylic acid, glybenclamide and 5-Nitro-2-(3-phenylpropyl-amino)benzoic acid.</text>
</comment>
<comment type="subcellular location">
    <subcellularLocation>
        <location evidence="4 6 7 8 9 10 11">Basolateral cell membrane</location>
        <topology evidence="2">Multi-pass membrane protein</topology>
    </subcellularLocation>
    <subcellularLocation>
        <location evidence="7">Recycling endosome membrane</location>
        <topology evidence="2">Multi-pass membrane protein</topology>
    </subcellularLocation>
    <subcellularLocation>
        <location evidence="1">Apical cell membrane</location>
        <topology evidence="2">Multi-pass membrane protein</topology>
    </subcellularLocation>
    <subcellularLocation>
        <location evidence="1">Lateral cell membrane</location>
        <topology evidence="2">Multi-pass membrane protein</topology>
    </subcellularLocation>
    <text evidence="1 4 6 7">Expressed on the basolateral membrane of acid-secreting gastric parietal cells, distal nephron segments and apical domains of proximal tubules and in the glomerulus. Expressed in the cytoplasm in recycling endosomes of kidney outer medullary collecting duct cells and in acid-secreting gastric parietal cells. Targeted to the basolateral membrane in hypertonicity and potassium depletion.</text>
</comment>
<comment type="tissue specificity">
    <text evidence="4 6 7 9 10 11">Expressed in the Reissner's membrane epithelial cells in the cochlea (at protein level) (PubMed:24810589). Expressed in the retinal pigment epithelium (at protein level) (PubMed:32726161). Abundantly expressed in parietal cells on the glandular portion of the stomach. Lower levels are observed in the kidney, with expression in the proximal tubule and thick ascending limb of the loop of Henle. Also expressed in distal segments of nephron, in extraglomerular mesagial cells and a subpopulation of intercalated cells of outer medullary collecting ducts. Expressed in the thyroid gland.</text>
</comment>
<comment type="disruption phenotype">
    <text evidence="8 10 11 12">Mice develop goitrous congenital hypothyroidism, with enlarged thyroid gland and severely reduced T4 than T3 in the serum and thyroid gland (PubMed:30333321, PubMed:35788623). Animals fed a low iodine diet show more severe growth failure than those fed a normal diet (PubMed:35788623). Develop distal renal tubular acidosis, manifested by metabolic acidosis and alkaline urine pH and in the stomach, stimulated acid secretion is significantly impaired (PubMed:19723628). Retinal pigment epithelium cells (RPE) from Slc26a7 KO mice have a dramatically smaller whole cell SCN (-) conductance compared with wild-type RPE cells (PubMed:32726161).</text>
</comment>
<comment type="similarity">
    <text evidence="2">Belongs to the SLC26A/SulP transporter (TC 2.A.53) family.</text>
</comment>
<comment type="caution">
    <text evidence="4 8">Although it is an anion channel, according to PubMed:12736153 and PubMed:19723628 it has been shown to exhibit chloride-bicarbonate exchanger activity.</text>
</comment>
<gene>
    <name evidence="16 18" type="primary">Slc26a7</name>
</gene>
<evidence type="ECO:0000250" key="1">
    <source>
        <dbReference type="UniProtKB" id="Q8TE54"/>
    </source>
</evidence>
<evidence type="ECO:0000255" key="2"/>
<evidence type="ECO:0000255" key="3">
    <source>
        <dbReference type="PROSITE-ProRule" id="PRU00198"/>
    </source>
</evidence>
<evidence type="ECO:0000269" key="4">
    <source>
    </source>
</evidence>
<evidence type="ECO:0000269" key="5">
    <source>
    </source>
</evidence>
<evidence type="ECO:0000269" key="6">
    <source>
    </source>
</evidence>
<evidence type="ECO:0000269" key="7">
    <source>
    </source>
</evidence>
<evidence type="ECO:0000269" key="8">
    <source>
    </source>
</evidence>
<evidence type="ECO:0000269" key="9">
    <source>
    </source>
</evidence>
<evidence type="ECO:0000269" key="10">
    <source>
    </source>
</evidence>
<evidence type="ECO:0000269" key="11">
    <source>
    </source>
</evidence>
<evidence type="ECO:0000269" key="12">
    <source>
    </source>
</evidence>
<evidence type="ECO:0000305" key="13"/>
<evidence type="ECO:0000305" key="14">
    <source>
    </source>
</evidence>
<evidence type="ECO:0000305" key="15">
    <source>
    </source>
</evidence>
<evidence type="ECO:0000312" key="16">
    <source>
        <dbReference type="EMBL" id="AAH26928.1"/>
    </source>
</evidence>
<evidence type="ECO:0000312" key="17">
    <source>
        <dbReference type="EMBL" id="AAO49172.1"/>
    </source>
</evidence>
<evidence type="ECO:0000312" key="18">
    <source>
        <dbReference type="MGI" id="MGI:2384791"/>
    </source>
</evidence>
<dbReference type="EMBL" id="AF345194">
    <property type="protein sequence ID" value="AAO49172.1"/>
    <property type="molecule type" value="mRNA"/>
</dbReference>
<dbReference type="EMBL" id="AL772236">
    <property type="status" value="NOT_ANNOTATED_CDS"/>
    <property type="molecule type" value="Genomic_DNA"/>
</dbReference>
<dbReference type="EMBL" id="AL772270">
    <property type="status" value="NOT_ANNOTATED_CDS"/>
    <property type="molecule type" value="Genomic_DNA"/>
</dbReference>
<dbReference type="EMBL" id="CH466538">
    <property type="protein sequence ID" value="EDL05611.1"/>
    <property type="molecule type" value="Genomic_DNA"/>
</dbReference>
<dbReference type="EMBL" id="BC026928">
    <property type="protein sequence ID" value="AAH26928.1"/>
    <property type="molecule type" value="mRNA"/>
</dbReference>
<dbReference type="CCDS" id="CCDS17979.1"/>
<dbReference type="RefSeq" id="NP_666059.2">
    <property type="nucleotide sequence ID" value="NM_145947.2"/>
</dbReference>
<dbReference type="SMR" id="Q8R2Z3"/>
<dbReference type="BioGRID" id="229021">
    <property type="interactions" value="12"/>
</dbReference>
<dbReference type="FunCoup" id="Q8R2Z3">
    <property type="interactions" value="32"/>
</dbReference>
<dbReference type="STRING" id="10090.ENSMUSP00000041789"/>
<dbReference type="PhosphoSitePlus" id="Q8R2Z3"/>
<dbReference type="jPOST" id="Q8R2Z3"/>
<dbReference type="PaxDb" id="10090-ENSMUSP00000041789"/>
<dbReference type="PeptideAtlas" id="Q8R2Z3"/>
<dbReference type="ProteomicsDB" id="253375"/>
<dbReference type="Antibodypedia" id="25657">
    <property type="antibodies" value="70 antibodies from 9 providers"/>
</dbReference>
<dbReference type="DNASU" id="208890"/>
<dbReference type="Ensembl" id="ENSMUST00000042221.14">
    <property type="protein sequence ID" value="ENSMUSP00000041789.8"/>
    <property type="gene ID" value="ENSMUSG00000040569.14"/>
</dbReference>
<dbReference type="GeneID" id="208890"/>
<dbReference type="KEGG" id="mmu:208890"/>
<dbReference type="UCSC" id="uc008saz.2">
    <property type="organism name" value="mouse"/>
</dbReference>
<dbReference type="AGR" id="MGI:2384791"/>
<dbReference type="CTD" id="115111"/>
<dbReference type="MGI" id="MGI:2384791">
    <property type="gene designation" value="Slc26a7"/>
</dbReference>
<dbReference type="VEuPathDB" id="HostDB:ENSMUSG00000040569"/>
<dbReference type="eggNOG" id="KOG0236">
    <property type="taxonomic scope" value="Eukaryota"/>
</dbReference>
<dbReference type="GeneTree" id="ENSGT01070000253775"/>
<dbReference type="HOGENOM" id="CLU_003182_9_5_1"/>
<dbReference type="InParanoid" id="Q8R2Z3"/>
<dbReference type="OMA" id="LDWSFIQ"/>
<dbReference type="OrthoDB" id="288203at2759"/>
<dbReference type="PhylomeDB" id="Q8R2Z3"/>
<dbReference type="TreeFam" id="TF313784"/>
<dbReference type="Reactome" id="R-MMU-427601">
    <property type="pathway name" value="Multifunctional anion exchangers"/>
</dbReference>
<dbReference type="BioGRID-ORCS" id="208890">
    <property type="hits" value="3 hits in 78 CRISPR screens"/>
</dbReference>
<dbReference type="PRO" id="PR:Q8R2Z3"/>
<dbReference type="Proteomes" id="UP000000589">
    <property type="component" value="Chromosome 4"/>
</dbReference>
<dbReference type="RNAct" id="Q8R2Z3">
    <property type="molecule type" value="protein"/>
</dbReference>
<dbReference type="Bgee" id="ENSMUSG00000040569">
    <property type="expression patterns" value="Expressed in vestibular membrane of cochlear duct and 174 other cell types or tissues"/>
</dbReference>
<dbReference type="ExpressionAtlas" id="Q8R2Z3">
    <property type="expression patterns" value="baseline and differential"/>
</dbReference>
<dbReference type="GO" id="GO:0016324">
    <property type="term" value="C:apical plasma membrane"/>
    <property type="evidence" value="ECO:0000250"/>
    <property type="project" value="UniProtKB"/>
</dbReference>
<dbReference type="GO" id="GO:0016323">
    <property type="term" value="C:basolateral plasma membrane"/>
    <property type="evidence" value="ECO:0000314"/>
    <property type="project" value="UniProtKB"/>
</dbReference>
<dbReference type="GO" id="GO:0016328">
    <property type="term" value="C:lateral plasma membrane"/>
    <property type="evidence" value="ECO:0000250"/>
    <property type="project" value="UniProtKB"/>
</dbReference>
<dbReference type="GO" id="GO:0016020">
    <property type="term" value="C:membrane"/>
    <property type="evidence" value="ECO:0000305"/>
    <property type="project" value="MGI"/>
</dbReference>
<dbReference type="GO" id="GO:0055038">
    <property type="term" value="C:recycling endosome membrane"/>
    <property type="evidence" value="ECO:0007669"/>
    <property type="project" value="UniProtKB-SubCell"/>
</dbReference>
<dbReference type="GO" id="GO:0015106">
    <property type="term" value="F:bicarbonate transmembrane transporter activity"/>
    <property type="evidence" value="ECO:0000315"/>
    <property type="project" value="UniProtKB"/>
</dbReference>
<dbReference type="GO" id="GO:0005254">
    <property type="term" value="F:chloride channel activity"/>
    <property type="evidence" value="ECO:0000314"/>
    <property type="project" value="UniProtKB"/>
</dbReference>
<dbReference type="GO" id="GO:0140900">
    <property type="term" value="F:chloride:bicarbonate antiporter activity"/>
    <property type="evidence" value="ECO:0000314"/>
    <property type="project" value="UniProtKB"/>
</dbReference>
<dbReference type="GO" id="GO:0005253">
    <property type="term" value="F:monoatomic anion channel activity"/>
    <property type="evidence" value="ECO:0000315"/>
    <property type="project" value="MGI"/>
</dbReference>
<dbReference type="GO" id="GO:0019531">
    <property type="term" value="F:oxalate transmembrane transporter activity"/>
    <property type="evidence" value="ECO:0007669"/>
    <property type="project" value="Ensembl"/>
</dbReference>
<dbReference type="GO" id="GO:0015116">
    <property type="term" value="F:sulfate transmembrane transporter activity"/>
    <property type="evidence" value="ECO:0007669"/>
    <property type="project" value="Ensembl"/>
</dbReference>
<dbReference type="GO" id="GO:0015701">
    <property type="term" value="P:bicarbonate transport"/>
    <property type="evidence" value="ECO:0000314"/>
    <property type="project" value="UniProtKB"/>
</dbReference>
<dbReference type="GO" id="GO:0006821">
    <property type="term" value="P:chloride transport"/>
    <property type="evidence" value="ECO:0000314"/>
    <property type="project" value="MGI"/>
</dbReference>
<dbReference type="GO" id="GO:0001696">
    <property type="term" value="P:gastric acid secretion"/>
    <property type="evidence" value="ECO:0000314"/>
    <property type="project" value="UniProtKB"/>
</dbReference>
<dbReference type="GO" id="GO:0035429">
    <property type="term" value="P:gluconate transmembrane transport"/>
    <property type="evidence" value="ECO:0000314"/>
    <property type="project" value="UniProtKB"/>
</dbReference>
<dbReference type="GO" id="GO:0015705">
    <property type="term" value="P:iodide transport"/>
    <property type="evidence" value="ECO:0000314"/>
    <property type="project" value="UniProtKB"/>
</dbReference>
<dbReference type="GO" id="GO:0006820">
    <property type="term" value="P:monoatomic anion transport"/>
    <property type="evidence" value="ECO:0000315"/>
    <property type="project" value="MGI"/>
</dbReference>
<dbReference type="GO" id="GO:0015706">
    <property type="term" value="P:nitrate transmembrane transport"/>
    <property type="evidence" value="ECO:0000314"/>
    <property type="project" value="UniProtKB"/>
</dbReference>
<dbReference type="GO" id="GO:0019532">
    <property type="term" value="P:oxalate transport"/>
    <property type="evidence" value="ECO:0000314"/>
    <property type="project" value="UniProtKB"/>
</dbReference>
<dbReference type="GO" id="GO:1902358">
    <property type="term" value="P:sulfate transmembrane transport"/>
    <property type="evidence" value="ECO:0000314"/>
    <property type="project" value="UniProtKB"/>
</dbReference>
<dbReference type="GO" id="GO:0006590">
    <property type="term" value="P:thyroid hormone generation"/>
    <property type="evidence" value="ECO:0000315"/>
    <property type="project" value="UniProtKB"/>
</dbReference>
<dbReference type="CDD" id="cd07042">
    <property type="entry name" value="STAS_SulP_like_sulfate_transporter"/>
    <property type="match status" value="1"/>
</dbReference>
<dbReference type="FunFam" id="3.30.750.24:FF:000016">
    <property type="entry name" value="Anion exchange transporter"/>
    <property type="match status" value="1"/>
</dbReference>
<dbReference type="Gene3D" id="3.30.750.24">
    <property type="entry name" value="STAS domain"/>
    <property type="match status" value="1"/>
</dbReference>
<dbReference type="InterPro" id="IPR011547">
    <property type="entry name" value="SLC26A/SulP_dom"/>
</dbReference>
<dbReference type="InterPro" id="IPR001902">
    <property type="entry name" value="SLC26A/SulP_fam"/>
</dbReference>
<dbReference type="InterPro" id="IPR002645">
    <property type="entry name" value="STAS_dom"/>
</dbReference>
<dbReference type="InterPro" id="IPR036513">
    <property type="entry name" value="STAS_dom_sf"/>
</dbReference>
<dbReference type="PANTHER" id="PTHR11814">
    <property type="entry name" value="SULFATE TRANSPORTER"/>
    <property type="match status" value="1"/>
</dbReference>
<dbReference type="Pfam" id="PF01740">
    <property type="entry name" value="STAS"/>
    <property type="match status" value="1"/>
</dbReference>
<dbReference type="Pfam" id="PF00916">
    <property type="entry name" value="Sulfate_transp"/>
    <property type="match status" value="1"/>
</dbReference>
<dbReference type="SUPFAM" id="SSF52091">
    <property type="entry name" value="SpoIIaa-like"/>
    <property type="match status" value="1"/>
</dbReference>
<dbReference type="PROSITE" id="PS50801">
    <property type="entry name" value="STAS"/>
    <property type="match status" value="1"/>
</dbReference>
<feature type="chain" id="PRO_0000320682" description="Anion exchange transporter">
    <location>
        <begin position="1"/>
        <end position="656"/>
    </location>
</feature>
<feature type="topological domain" description="Cytoplasmic" evidence="2">
    <location>
        <begin position="1"/>
        <end position="75"/>
    </location>
</feature>
<feature type="transmembrane region" description="Helical" evidence="2">
    <location>
        <begin position="76"/>
        <end position="96"/>
    </location>
</feature>
<feature type="topological domain" description="Extracellular" evidence="2">
    <location>
        <begin position="97"/>
        <end position="144"/>
    </location>
</feature>
<feature type="transmembrane region" description="Helical" evidence="2">
    <location>
        <begin position="145"/>
        <end position="165"/>
    </location>
</feature>
<feature type="topological domain" description="Cytoplasmic" evidence="2">
    <location>
        <position position="166"/>
    </location>
</feature>
<feature type="transmembrane region" description="Helical" evidence="2">
    <location>
        <begin position="167"/>
        <end position="187"/>
    </location>
</feature>
<feature type="topological domain" description="Extracellular" evidence="2">
    <location>
        <begin position="188"/>
        <end position="199"/>
    </location>
</feature>
<feature type="transmembrane region" description="Helical" evidence="2">
    <location>
        <begin position="200"/>
        <end position="220"/>
    </location>
</feature>
<feature type="topological domain" description="Cytoplasmic" evidence="2">
    <location>
        <begin position="221"/>
        <end position="222"/>
    </location>
</feature>
<feature type="transmembrane region" description="Helical" evidence="2">
    <location>
        <begin position="223"/>
        <end position="243"/>
    </location>
</feature>
<feature type="topological domain" description="Extracellular" evidence="2">
    <location>
        <begin position="244"/>
        <end position="254"/>
    </location>
</feature>
<feature type="transmembrane region" description="Helical" evidence="2">
    <location>
        <begin position="255"/>
        <end position="275"/>
    </location>
</feature>
<feature type="topological domain" description="Cytoplasmic" evidence="2">
    <location>
        <begin position="276"/>
        <end position="306"/>
    </location>
</feature>
<feature type="transmembrane region" description="Helical" evidence="2">
    <location>
        <begin position="307"/>
        <end position="327"/>
    </location>
</feature>
<feature type="topological domain" description="Extracellular" evidence="2">
    <location>
        <begin position="328"/>
        <end position="343"/>
    </location>
</feature>
<feature type="transmembrane region" description="Helical" evidence="2">
    <location>
        <begin position="344"/>
        <end position="364"/>
    </location>
</feature>
<feature type="topological domain" description="Cytoplasmic" evidence="2">
    <location>
        <begin position="365"/>
        <end position="383"/>
    </location>
</feature>
<feature type="transmembrane region" description="Helical" evidence="2">
    <location>
        <begin position="384"/>
        <end position="404"/>
    </location>
</feature>
<feature type="transmembrane region" description="Helical" evidence="2">
    <location>
        <begin position="405"/>
        <end position="425"/>
    </location>
</feature>
<feature type="topological domain" description="Extracellular" evidence="2">
    <location>
        <begin position="426"/>
        <end position="448"/>
    </location>
</feature>
<feature type="transmembrane region" description="Helical" evidence="2">
    <location>
        <begin position="449"/>
        <end position="469"/>
    </location>
</feature>
<feature type="topological domain" description="Cytoplasmic" evidence="2">
    <location>
        <begin position="470"/>
        <end position="656"/>
    </location>
</feature>
<feature type="domain" description="STAS" evidence="3">
    <location>
        <begin position="492"/>
        <end position="641"/>
    </location>
</feature>
<feature type="region of interest" description="Membrane targeting" evidence="1">
    <location>
        <begin position="641"/>
        <end position="656"/>
    </location>
</feature>
<feature type="sequence conflict" description="In Ref. 1; AAO49172 and 4; AAH26928." evidence="13" ref="1 4">
    <original>F</original>
    <variation>L</variation>
    <location>
        <position position="233"/>
    </location>
</feature>
<feature type="sequence conflict" description="In Ref. 1; AAO49172 and 4; AAH26928." evidence="13" ref="1 4">
    <original>S</original>
    <variation>T</variation>
    <location>
        <position position="639"/>
    </location>
</feature>
<keyword id="KW-0039">Anion exchange</keyword>
<keyword id="KW-1003">Cell membrane</keyword>
<keyword id="KW-0967">Endosome</keyword>
<keyword id="KW-0406">Ion transport</keyword>
<keyword id="KW-0472">Membrane</keyword>
<keyword id="KW-1185">Reference proteome</keyword>
<keyword id="KW-0812">Transmembrane</keyword>
<keyword id="KW-1133">Transmembrane helix</keyword>
<keyword id="KW-0813">Transport</keyword>
<protein>
    <recommendedName>
        <fullName>Anion exchange transporter</fullName>
    </recommendedName>
    <alternativeName>
        <fullName>Solute carrier family 26 member 7</fullName>
    </alternativeName>
</protein>
<sequence>MTGAKRKKRSVLWGKMHTPHREDIKQWCKRRLPILEWAPQYNLKENLLPDTVSGIMLAVQQVAQGLSFAMLSSVHPVFGLYGSLFPAIIYAIFGMGRHVATGTFALTSLISANAVERLVPQSSRNLTTQSNSSVLGLSEFELQRIGVAAAVSFLGGVIQLVMFVLQLGSATFLLTEPVISAMTTGAATHVVTSQVKYLLGIKMPYISGPLGFFYIYAYVFENIKSVQLEALLFSLLSIIVLVLVKELNEQFKRKIKVVLPVDLVLIIAASFACYCTNMENTYGLEVVGHIPNGIPPPRAPPMNILSAVLTEAFGVALVGYVASLALAQGSAKKFKYSVDDNQEFLAHGLSNVIPSFLFCIPSAAAMGRTAGLYSTGAKTQVACLISCIFVLIVIYAIGPLLYWLPMCVLASIIVVGLKGMLIQFRDLKKYWNVDKIDWGIWISTYIFTICFAANVGLLFGVICTIAIVLGRFPRAKTLSITDMKEMELKVKTEMHDETSQQIKIISINNPLVFLNAKKFSADLMKIILKESDSNQPLDDVSKCEQNTLLSSLSNGNCNEEASQPCSSEKCSLVLNCSGLTFFDYTGVSTLVELYLDCKSRSVDVFLANCTASLIKAMTYYGDLDTEKPIFFDSVPAAISIIQSNKNLSKASDHSEV</sequence>
<reference evidence="17" key="1">
    <citation type="submission" date="2001-02" db="EMBL/GenBank/DDBJ databases">
        <title>Characterization of Mus musculus Slc26a7, a novel putative anion exchanger.</title>
        <authorList>
            <person name="Mount D.B."/>
        </authorList>
    </citation>
    <scope>NUCLEOTIDE SEQUENCE [MRNA]</scope>
    <source>
        <strain evidence="17">C57BL/6J</strain>
    </source>
</reference>
<reference key="2">
    <citation type="journal article" date="2009" name="PLoS Biol.">
        <title>Lineage-specific biology revealed by a finished genome assembly of the mouse.</title>
        <authorList>
            <person name="Church D.M."/>
            <person name="Goodstadt L."/>
            <person name="Hillier L.W."/>
            <person name="Zody M.C."/>
            <person name="Goldstein S."/>
            <person name="She X."/>
            <person name="Bult C.J."/>
            <person name="Agarwala R."/>
            <person name="Cherry J.L."/>
            <person name="DiCuccio M."/>
            <person name="Hlavina W."/>
            <person name="Kapustin Y."/>
            <person name="Meric P."/>
            <person name="Maglott D."/>
            <person name="Birtle Z."/>
            <person name="Marques A.C."/>
            <person name="Graves T."/>
            <person name="Zhou S."/>
            <person name="Teague B."/>
            <person name="Potamousis K."/>
            <person name="Churas C."/>
            <person name="Place M."/>
            <person name="Herschleb J."/>
            <person name="Runnheim R."/>
            <person name="Forrest D."/>
            <person name="Amos-Landgraf J."/>
            <person name="Schwartz D.C."/>
            <person name="Cheng Z."/>
            <person name="Lindblad-Toh K."/>
            <person name="Eichler E.E."/>
            <person name="Ponting C.P."/>
        </authorList>
    </citation>
    <scope>NUCLEOTIDE SEQUENCE [LARGE SCALE GENOMIC DNA]</scope>
    <source>
        <strain>C57BL/6J</strain>
    </source>
</reference>
<reference evidence="17" key="3">
    <citation type="submission" date="2005-07" db="EMBL/GenBank/DDBJ databases">
        <authorList>
            <person name="Mural R.J."/>
            <person name="Adams M.D."/>
            <person name="Myers E.W."/>
            <person name="Smith H.O."/>
            <person name="Venter J.C."/>
        </authorList>
    </citation>
    <scope>NUCLEOTIDE SEQUENCE [LARGE SCALE GENOMIC DNA]</scope>
</reference>
<reference evidence="16" key="4">
    <citation type="journal article" date="2004" name="Genome Res.">
        <title>The status, quality, and expansion of the NIH full-length cDNA project: the Mammalian Gene Collection (MGC).</title>
        <authorList>
            <consortium name="The MGC Project Team"/>
        </authorList>
    </citation>
    <scope>NUCLEOTIDE SEQUENCE [LARGE SCALE MRNA]</scope>
    <source>
        <strain evidence="16">Czech II</strain>
        <tissue evidence="16">Mammary tumor</tissue>
    </source>
</reference>
<reference evidence="13" key="5">
    <citation type="journal article" date="2003" name="Am. J. Physiol.">
        <title>Identification of a basolateral Cl-/HCO3- exchanger specific to gastric parietal cells.</title>
        <authorList>
            <person name="Petrovic S."/>
            <person name="Ju X."/>
            <person name="Barone S."/>
            <person name="Seidler U."/>
            <person name="Alper S.L."/>
            <person name="Lohi H."/>
            <person name="Kere J."/>
            <person name="Soleimani M."/>
        </authorList>
    </citation>
    <scope>IDENTIFICATION</scope>
    <scope>FUNCTION</scope>
    <scope>SUBCELLULAR LOCATION</scope>
    <scope>TISSUE SPECIFICITY</scope>
    <scope>TRANSPORTER ACTIVITY</scope>
    <scope>ACTIVITY REGULATION</scope>
</reference>
<reference evidence="13" key="6">
    <citation type="journal article" date="2005" name="J. Biol. Chem.">
        <title>SLC26A7 is a Cl- channel regulated by intracellular pH.</title>
        <authorList>
            <person name="Kim K.H."/>
            <person name="Shcheynikov N."/>
            <person name="Wang Y."/>
            <person name="Muallem S."/>
        </authorList>
    </citation>
    <scope>FUNCTION</scope>
    <scope>ACTIVITY REGULATION</scope>
    <scope>TRANSPORTER ACTIVITY</scope>
</reference>
<reference evidence="13" key="7">
    <citation type="journal article" date="2006" name="Am. J. Physiol.">
        <title>Immunolocalization of anion transporter Slc26a7 in mouse kidney.</title>
        <authorList>
            <person name="Dudas P.L."/>
            <person name="Mentone S."/>
            <person name="Greineder C.F."/>
            <person name="Biemesderfer D."/>
            <person name="Aronson P.S."/>
        </authorList>
    </citation>
    <scope>SUBCELLULAR LOCATION</scope>
    <scope>TISSUE SPECIFICITY</scope>
</reference>
<reference evidence="13" key="8">
    <citation type="journal article" date="2006" name="J. Am. Soc. Nephrol.">
        <title>Chloride/bicarbonate exchanger SLC26A7 is localized in endosomes in medullary collecting duct cells and is targeted to the basolateral membrane in hypertonicity and potassium depletion.</title>
        <authorList>
            <person name="Xu J."/>
            <person name="Worrell R.T."/>
            <person name="Li H.C."/>
            <person name="Barone S.L."/>
            <person name="Petrovic S."/>
            <person name="Amlal H."/>
            <person name="Soleimani M."/>
        </authorList>
    </citation>
    <scope>SUBCELLULAR LOCATION</scope>
    <scope>TISSUE SPECIFICITY</scope>
</reference>
<reference key="9">
    <citation type="journal article" date="2009" name="J. Biol. Chem.">
        <title>Deletion of the chloride transporter slc26a7 causes distal renal tubular acidosis and impairs gastric acid secretion.</title>
        <authorList>
            <person name="Xu J."/>
            <person name="Song P."/>
            <person name="Nakamura S."/>
            <person name="Miller M."/>
            <person name="Barone S."/>
            <person name="Alper S.L."/>
            <person name="Riederer B."/>
            <person name="Bonhagen J."/>
            <person name="Arend L.J."/>
            <person name="Amlal H."/>
            <person name="Seidler U."/>
            <person name="Soleimani M."/>
        </authorList>
    </citation>
    <scope>FUNCTION</scope>
    <scope>TRANSPORTER ACTIVITY</scope>
    <scope>DISRUPTION PHENOTYPE</scope>
    <scope>SUBCELLULAR LOCATION</scope>
</reference>
<reference key="10">
    <citation type="journal article" date="2014" name="PLoS ONE">
        <title>Slc26a7 chloride channel activity and localization in mouse Reissner's membrane epithelium.</title>
        <authorList>
            <person name="Kim K.X."/>
            <person name="Sanneman J.D."/>
            <person name="Kim H.M."/>
            <person name="Harbidge D.G."/>
            <person name="Xu J."/>
            <person name="Soleimani M."/>
            <person name="Wangemann P."/>
            <person name="Marcus D.C."/>
        </authorList>
    </citation>
    <scope>FUNCTION</scope>
    <scope>TRANSPORTER ACTIVITY</scope>
    <scope>SUBCELLULAR LOCATION</scope>
    <scope>TISSUE SPECIFICITY</scope>
    <scope>ACTIVITY REGULATION</scope>
</reference>
<reference key="11">
    <citation type="journal article" date="2018" name="JCI Insight">
        <title>Homozygous loss-of-function mutations in SLC26A7 cause goitrous congenital hypothyroidism.</title>
        <authorList>
            <person name="Cangul H."/>
            <person name="Liao X.H."/>
            <person name="Schoenmakers E."/>
            <person name="Kero J."/>
            <person name="Barone S."/>
            <person name="Srichomkwun P."/>
            <person name="Iwayama H."/>
            <person name="Serra E.G."/>
            <person name="Saglam H."/>
            <person name="Eren E."/>
            <person name="Tarim O."/>
            <person name="Nicholas A.K."/>
            <person name="Zvetkova I."/>
            <person name="Anderson C.A."/>
            <person name="Frankl F.E.K."/>
            <person name="Boelaert K."/>
            <person name="Ojaniemi M."/>
            <person name="Jaeaeskelaeinen J."/>
            <person name="Patyra K."/>
            <person name="Loef C."/>
            <person name="Williams E.D."/>
            <person name="Soleimani M."/>
            <person name="Barrett T."/>
            <person name="Maher E.R."/>
            <person name="Chatterjee V.K."/>
            <person name="Refetoff S."/>
            <person name="Schoenmakers N."/>
        </authorList>
    </citation>
    <scope>FUNCTION</scope>
    <scope>TRANSPORTER ACTIVITY</scope>
    <scope>DISRUPTION PHENOTYPE</scope>
    <scope>SUBCELLULAR LOCATION</scope>
    <scope>TISSUE SPECIFICITY</scope>
</reference>
<reference key="12">
    <citation type="journal article" date="2020" name="Am. J. Physiol.">
        <title>SLC26A7 constitutes the thiocyanate-selective anion conductance of the basolateral membrane of the retinal pigment epithelium.</title>
        <authorList>
            <person name="Cao X."/>
            <person name="Soleimani M."/>
            <person name="Hughes B.A."/>
        </authorList>
    </citation>
    <scope>FUNCTION</scope>
    <scope>TRANSPORTER ACTIVITY</scope>
    <scope>DISRUPTION PHENOTYPE</scope>
    <scope>SUBCELLULAR LOCATION</scope>
    <scope>TISSUE SPECIFICITY</scope>
</reference>
<reference key="13">
    <citation type="journal article" date="2022" name="Sci. Rep.">
        <title>The iodide transporter Slc26a7 impacts thyroid function more strongly than Slc26a4 in mice.</title>
        <authorList>
            <person name="Yamaguchi N."/>
            <person name="Suzuki A."/>
            <person name="Yoshida A."/>
            <person name="Tanaka T."/>
            <person name="Aoyama K."/>
            <person name="Oishi H."/>
            <person name="Hara Y."/>
            <person name="Ogi T."/>
            <person name="Amano I."/>
            <person name="Kameo S."/>
            <person name="Koibuchi N."/>
            <person name="Shibata Y."/>
            <person name="Ugawa S."/>
            <person name="Mizuno H."/>
            <person name="Saitoh S."/>
        </authorList>
    </citation>
    <scope>FUNCTION</scope>
    <scope>TRANSPORTER ACTIVITY</scope>
    <scope>DISRUPTION PHENOTYPE</scope>
</reference>
<name>S26A7_MOUSE</name>
<organism>
    <name type="scientific">Mus musculus</name>
    <name type="common">Mouse</name>
    <dbReference type="NCBI Taxonomy" id="10090"/>
    <lineage>
        <taxon>Eukaryota</taxon>
        <taxon>Metazoa</taxon>
        <taxon>Chordata</taxon>
        <taxon>Craniata</taxon>
        <taxon>Vertebrata</taxon>
        <taxon>Euteleostomi</taxon>
        <taxon>Mammalia</taxon>
        <taxon>Eutheria</taxon>
        <taxon>Euarchontoglires</taxon>
        <taxon>Glires</taxon>
        <taxon>Rodentia</taxon>
        <taxon>Myomorpha</taxon>
        <taxon>Muroidea</taxon>
        <taxon>Muridae</taxon>
        <taxon>Murinae</taxon>
        <taxon>Mus</taxon>
        <taxon>Mus</taxon>
    </lineage>
</organism>
<proteinExistence type="evidence at protein level"/>